<evidence type="ECO:0000255" key="1">
    <source>
        <dbReference type="HAMAP-Rule" id="MF_00774"/>
    </source>
</evidence>
<protein>
    <recommendedName>
        <fullName evidence="1">Acyl transferase</fullName>
        <shortName evidence="1">ACT</shortName>
        <ecNumber evidence="1">2.3.1.-</ecNumber>
    </recommendedName>
    <alternativeName>
        <fullName evidence="1">C14ACP-TE</fullName>
    </alternativeName>
    <alternativeName>
        <fullName evidence="1">Myristoyl-ACP-specific thioesterase</fullName>
    </alternativeName>
</protein>
<keyword id="KW-0012">Acyltransferase</keyword>
<keyword id="KW-0455">Luminescence</keyword>
<keyword id="KW-0808">Transferase</keyword>
<feature type="chain" id="PRO_0000220191" description="Acyl transferase">
    <location>
        <begin position="1"/>
        <end position="307"/>
    </location>
</feature>
<feature type="active site" description="Charge relay system" evidence="1">
    <location>
        <position position="116"/>
    </location>
</feature>
<feature type="active site" description="Charge relay system" evidence="1">
    <location>
        <position position="213"/>
    </location>
</feature>
<feature type="active site" description="Charge relay system" evidence="1">
    <location>
        <position position="243"/>
    </location>
</feature>
<proteinExistence type="inferred from homology"/>
<sequence>MENKSRYKTIDHVICVEENRKIHVWETLPKENSPKRKNTLIIASGFARRMDHFAGLAEYLSQNGFHVIRYDSLHHVGLSSGTIDEFTMSIGKQSLLAVVDWLNTRKINNLGMLASSLSARIAYASLSEINVSFLITAVGVVNLRYTLERALGFDYLSLPIDELPDNLDFEGHKLGAEVFARDCFDSGWEDLTSTINSMMHLDIPFIAFTANNDDWVKQDEVITLLSSIRSHQCKIYSLLGSSHDLGENLVVLRNFYQSVTKAAIAMDNGCLDIDVDIIEPSFEHLTIAAVNERRMKIEIENQVISLS</sequence>
<comment type="function">
    <text>Acyl transferase is part of the fatty acid reductase system required for aldehyde biosynthesis; it produces fatty acids for the luminescent reaction.</text>
</comment>
<comment type="pathway">
    <text evidence="1">Lipid metabolism; fatty acid reduction for biolumincescence.</text>
</comment>
<comment type="similarity">
    <text evidence="1">Belongs to the LuxD family.</text>
</comment>
<name>LUXD2_PHOLU</name>
<reference key="1">
    <citation type="journal article" date="1991" name="J. Bacteriol.">
        <title>Cloning and nucleotide sequences of lux genes and characterization of luciferase of Xenorhabdus luminescens from a human wound.</title>
        <authorList>
            <person name="Xi L."/>
            <person name="Cho K.W."/>
            <person name="Tu S.C."/>
        </authorList>
    </citation>
    <scope>NUCLEOTIDE SEQUENCE [GENOMIC DNA]</scope>
    <source>
        <strain>Hw</strain>
    </source>
</reference>
<reference key="2">
    <citation type="journal article" date="1992" name="J. Bacteriol.">
        <title>Multiple repetitive elements and organization of the lux operons of luminescent terrestrial bacteria.</title>
        <authorList>
            <person name="Meighen E.A."/>
            <person name="Szittner R.B."/>
        </authorList>
    </citation>
    <scope>NUCLEOTIDE SEQUENCE [GENOMIC DNA]</scope>
    <source>
        <strain>Hw</strain>
    </source>
</reference>
<dbReference type="EC" id="2.3.1.-" evidence="1"/>
<dbReference type="EMBL" id="M90092">
    <property type="protein sequence ID" value="AAD05356.1"/>
    <property type="molecule type" value="Genomic_DNA"/>
</dbReference>
<dbReference type="EMBL" id="M62917">
    <property type="protein sequence ID" value="AAA63564.1"/>
    <property type="molecule type" value="Genomic_DNA"/>
</dbReference>
<dbReference type="PIR" id="B38448">
    <property type="entry name" value="B38448"/>
</dbReference>
<dbReference type="SMR" id="P23148"/>
<dbReference type="ESTHER" id="pholu-lxd2">
    <property type="family name" value="Thioesterase_acyl-transferase"/>
</dbReference>
<dbReference type="UniPathway" id="UPA00569"/>
<dbReference type="GO" id="GO:0016747">
    <property type="term" value="F:acyltransferase activity, transferring groups other than amino-acyl groups"/>
    <property type="evidence" value="ECO:0007669"/>
    <property type="project" value="UniProtKB-UniRule"/>
</dbReference>
<dbReference type="GO" id="GO:0008218">
    <property type="term" value="P:bioluminescence"/>
    <property type="evidence" value="ECO:0007669"/>
    <property type="project" value="UniProtKB-UniRule"/>
</dbReference>
<dbReference type="GO" id="GO:0006631">
    <property type="term" value="P:fatty acid metabolic process"/>
    <property type="evidence" value="ECO:0007669"/>
    <property type="project" value="InterPro"/>
</dbReference>
<dbReference type="Gene3D" id="3.40.50.1820">
    <property type="entry name" value="alpha/beta hydrolase"/>
    <property type="match status" value="1"/>
</dbReference>
<dbReference type="HAMAP" id="MF_00774">
    <property type="entry name" value="LuxD"/>
    <property type="match status" value="1"/>
</dbReference>
<dbReference type="InterPro" id="IPR029058">
    <property type="entry name" value="AB_hydrolase_fold"/>
</dbReference>
<dbReference type="InterPro" id="IPR003157">
    <property type="entry name" value="LuxD"/>
</dbReference>
<dbReference type="NCBIfam" id="NF010127">
    <property type="entry name" value="PRK13604.1"/>
    <property type="match status" value="1"/>
</dbReference>
<dbReference type="Pfam" id="PF02273">
    <property type="entry name" value="Acyl_transf_2"/>
    <property type="match status" value="1"/>
</dbReference>
<dbReference type="PIRSF" id="PIRSF009416">
    <property type="entry name" value="LuxD"/>
    <property type="match status" value="1"/>
</dbReference>
<dbReference type="SUPFAM" id="SSF53474">
    <property type="entry name" value="alpha/beta-Hydrolases"/>
    <property type="match status" value="1"/>
</dbReference>
<gene>
    <name evidence="1" type="primary">luxD</name>
</gene>
<organism>
    <name type="scientific">Photorhabdus luminescens</name>
    <name type="common">Xenorhabdus luminescens</name>
    <dbReference type="NCBI Taxonomy" id="29488"/>
    <lineage>
        <taxon>Bacteria</taxon>
        <taxon>Pseudomonadati</taxon>
        <taxon>Pseudomonadota</taxon>
        <taxon>Gammaproteobacteria</taxon>
        <taxon>Enterobacterales</taxon>
        <taxon>Morganellaceae</taxon>
        <taxon>Photorhabdus</taxon>
    </lineage>
</organism>
<accession>P23148</accession>